<organism>
    <name type="scientific">Bovine herpesvirus 1.1 (strain P8-2)</name>
    <name type="common">BoHV-1</name>
    <name type="synonym">Infectious bovine rhinotracheitis virus</name>
    <dbReference type="NCBI Taxonomy" id="10324"/>
    <lineage>
        <taxon>Viruses</taxon>
        <taxon>Duplodnaviria</taxon>
        <taxon>Heunggongvirae</taxon>
        <taxon>Peploviricota</taxon>
        <taxon>Herviviricetes</taxon>
        <taxon>Herpesvirales</taxon>
        <taxon>Orthoherpesviridae</taxon>
        <taxon>Alphaherpesvirinae</taxon>
        <taxon>Varicellovirus</taxon>
        <taxon>Varicellovirus bovinealpha1</taxon>
    </lineage>
</organism>
<gene>
    <name type="primary">gD</name>
    <name type="synonym">gIV</name>
    <name type="synonym">US6</name>
</gene>
<protein>
    <recommendedName>
        <fullName>Envelope glycoprotein D</fullName>
        <shortName>gD</shortName>
    </recommendedName>
    <alternativeName>
        <fullName>Glycoprotein IV</fullName>
    </alternativeName>
</protein>
<organismHost>
    <name type="scientific">Bos taurus</name>
    <name type="common">Bovine</name>
    <dbReference type="NCBI Taxonomy" id="9913"/>
</organismHost>
<reference key="1">
    <citation type="journal article" date="1990" name="J. Virol.">
        <title>Molecular cloning, sequencing, and expression of functional bovine herpesvirus 1 glycoprotein gIV in transfected bovine cells.</title>
        <authorList>
            <person name="Tikoo S.K."/>
            <person name="Fitzpatrick D.R."/>
            <person name="Babiuk L.A."/>
            <person name="Zamb T.J."/>
        </authorList>
    </citation>
    <scope>NUCLEOTIDE SEQUENCE [GENOMIC DNA]</scope>
    <scope>PROTEIN SEQUENCE OF 19-48</scope>
</reference>
<feature type="signal peptide" evidence="6">
    <location>
        <begin position="1"/>
        <end position="18"/>
    </location>
</feature>
<feature type="chain" id="PRO_0000038219" description="Envelope glycoprotein D">
    <location>
        <begin position="19"/>
        <end position="417"/>
    </location>
</feature>
<feature type="topological domain" description="Virion surface" evidence="4">
    <location>
        <begin position="19"/>
        <end position="360"/>
    </location>
</feature>
<feature type="transmembrane region" description="Helical" evidence="4">
    <location>
        <begin position="361"/>
        <end position="389"/>
    </location>
</feature>
<feature type="topological domain" description="Intravirion" evidence="4">
    <location>
        <begin position="390"/>
        <end position="417"/>
    </location>
</feature>
<feature type="region of interest" description="Disordered" evidence="5">
    <location>
        <begin position="259"/>
        <end position="356"/>
    </location>
</feature>
<feature type="compositionally biased region" description="Acidic residues" evidence="5">
    <location>
        <begin position="279"/>
        <end position="292"/>
    </location>
</feature>
<feature type="glycosylation site" description="N-linked (GlcNAc...) asparagine; by host" evidence="4">
    <location>
        <position position="41"/>
    </location>
</feature>
<feature type="glycosylation site" description="N-linked (GlcNAc...) asparagine; by host" evidence="4">
    <location>
        <position position="102"/>
    </location>
</feature>
<feature type="disulfide bond" evidence="1">
    <location>
        <begin position="75"/>
        <end position="197"/>
    </location>
</feature>
<feature type="disulfide bond" evidence="1">
    <location>
        <begin position="114"/>
        <end position="213"/>
    </location>
</feature>
<feature type="disulfide bond" evidence="1">
    <location>
        <begin position="126"/>
        <end position="135"/>
    </location>
</feature>
<sequence length="417" mass="44925">MQGPTLAVLGALLAVAVSLPTPAPRVTVYVDPPAYPMPRYNYTERWHTTGPIPSPFADGREQPVEVRYATSAAACDMLALIADPQVGRTLWEAVRRHARAYNATVIWYKIESGCARPLYYMEYTECEPRKHFGYCRYRTPPFWDSFLAGFAYPTDDELGLIMAAPARLVEGQYRRALYIDGTVAYTDFMVSLPAGDCWFSKLGAARGYTFGACFPARDYEQKKVLRLTYLTQYYPQEAHKAIVDYWFMRHGGVVPPYFEESKGYEPPPAADGGSPAPPGDDEAREDEGETEDGAAGREGNGGPPGPEGDGESQTPEANGGAEGEPKPGPSPDADRPEGWPSLEAITHPPPAPATPAAPDAVPVSVGIGIAAAAIACVAAAAAGAYFVYTRRRGAGPLPRKPKKLPAFGNVNYSALPG</sequence>
<evidence type="ECO:0000250" key="1"/>
<evidence type="ECO:0000250" key="2">
    <source>
        <dbReference type="UniProtKB" id="Q05059"/>
    </source>
</evidence>
<evidence type="ECO:0000250" key="3">
    <source>
        <dbReference type="UniProtKB" id="Q69091"/>
    </source>
</evidence>
<evidence type="ECO:0000255" key="4"/>
<evidence type="ECO:0000256" key="5">
    <source>
        <dbReference type="SAM" id="MobiDB-lite"/>
    </source>
</evidence>
<evidence type="ECO:0000269" key="6">
    <source>
    </source>
</evidence>
<evidence type="ECO:0000305" key="7"/>
<keyword id="KW-0903">Direct protein sequencing</keyword>
<keyword id="KW-1015">Disulfide bond</keyword>
<keyword id="KW-0325">Glycoprotein</keyword>
<keyword id="KW-0945">Host-virus interaction</keyword>
<keyword id="KW-0472">Membrane</keyword>
<keyword id="KW-0732">Signal</keyword>
<keyword id="KW-0812">Transmembrane</keyword>
<keyword id="KW-1133">Transmembrane helix</keyword>
<keyword id="KW-1161">Viral attachment to host cell</keyword>
<keyword id="KW-1234">Viral attachment to host entry receptor</keyword>
<keyword id="KW-0261">Viral envelope protein</keyword>
<keyword id="KW-0946">Virion</keyword>
<keyword id="KW-1160">Virus entry into host cell</keyword>
<dbReference type="EMBL" id="M59846">
    <property type="protein sequence ID" value="AAA46050.1"/>
    <property type="molecule type" value="Genomic_DNA"/>
</dbReference>
<dbReference type="PIR" id="A36548">
    <property type="entry name" value="VGBEIB"/>
</dbReference>
<dbReference type="RefSeq" id="NP_045370.1">
    <property type="nucleotide sequence ID" value="NC_001847.1"/>
</dbReference>
<dbReference type="SMR" id="P0CK29"/>
<dbReference type="GlyCosmos" id="P0CK29">
    <property type="glycosylation" value="2 sites, No reported glycans"/>
</dbReference>
<dbReference type="GO" id="GO:0016020">
    <property type="term" value="C:membrane"/>
    <property type="evidence" value="ECO:0007669"/>
    <property type="project" value="UniProtKB-KW"/>
</dbReference>
<dbReference type="GO" id="GO:0019031">
    <property type="term" value="C:viral envelope"/>
    <property type="evidence" value="ECO:0007669"/>
    <property type="project" value="UniProtKB-KW"/>
</dbReference>
<dbReference type="GO" id="GO:0055036">
    <property type="term" value="C:virion membrane"/>
    <property type="evidence" value="ECO:0007669"/>
    <property type="project" value="UniProtKB-SubCell"/>
</dbReference>
<dbReference type="GO" id="GO:0098670">
    <property type="term" value="P:entry receptor-mediated virion attachment to host cell"/>
    <property type="evidence" value="ECO:0007669"/>
    <property type="project" value="UniProtKB-KW"/>
</dbReference>
<dbReference type="GO" id="GO:0046718">
    <property type="term" value="P:symbiont entry into host cell"/>
    <property type="evidence" value="ECO:0007669"/>
    <property type="project" value="UniProtKB-KW"/>
</dbReference>
<dbReference type="Gene3D" id="2.70.230.10">
    <property type="match status" value="1"/>
</dbReference>
<dbReference type="InterPro" id="IPR002896">
    <property type="entry name" value="Herpes_glycop_dom"/>
</dbReference>
<dbReference type="InterPro" id="IPR036179">
    <property type="entry name" value="Ig-like_dom_sf"/>
</dbReference>
<dbReference type="Pfam" id="PF01537">
    <property type="entry name" value="Herpes_glycop_D"/>
    <property type="match status" value="1"/>
</dbReference>
<dbReference type="SUPFAM" id="SSF48726">
    <property type="entry name" value="Immunoglobulin"/>
    <property type="match status" value="1"/>
</dbReference>
<proteinExistence type="evidence at protein level"/>
<name>GD_BHV1P</name>
<comment type="function">
    <text evidence="2">Envelope glycoprotein that binds to host cell entry receptors, promoting the virus entry into host cells. May trigger fusion with host membrane, by recruiting the fusion machinery composed of gB and gH/gL (By similarity).</text>
</comment>
<comment type="subcellular location">
    <subcellularLocation>
        <location evidence="2">Virion membrane</location>
        <topology evidence="2">Single-pass type I membrane protein</topology>
    </subcellularLocation>
    <text evidence="3">During virion morphogenesis, this protein probably accumulates in the endosomes and trans-Golgi where secondary envelopment occurs.</text>
</comment>
<comment type="similarity">
    <text evidence="7">Belongs to the herpesviridae glycoprotein D family.</text>
</comment>
<accession>P0CK29</accession>
<accession>P24906</accession>